<organism>
    <name type="scientific">Aromatoleum aromaticum (strain DSM 19018 / LMG 30748 / EbN1)</name>
    <name type="common">Azoarcus sp. (strain EbN1)</name>
    <dbReference type="NCBI Taxonomy" id="76114"/>
    <lineage>
        <taxon>Bacteria</taxon>
        <taxon>Pseudomonadati</taxon>
        <taxon>Pseudomonadota</taxon>
        <taxon>Betaproteobacteria</taxon>
        <taxon>Rhodocyclales</taxon>
        <taxon>Rhodocyclaceae</taxon>
        <taxon>Aromatoleum</taxon>
    </lineage>
</organism>
<dbReference type="EC" id="2.4.99.28" evidence="1"/>
<dbReference type="EMBL" id="CR555306">
    <property type="protein sequence ID" value="CAI06916.1"/>
    <property type="molecule type" value="Genomic_DNA"/>
</dbReference>
<dbReference type="RefSeq" id="WP_011236644.1">
    <property type="nucleotide sequence ID" value="NC_006513.1"/>
</dbReference>
<dbReference type="SMR" id="Q5P6Z5"/>
<dbReference type="STRING" id="76114.ebA1445"/>
<dbReference type="KEGG" id="eba:ebA1445"/>
<dbReference type="eggNOG" id="COG0772">
    <property type="taxonomic scope" value="Bacteria"/>
</dbReference>
<dbReference type="HOGENOM" id="CLU_029243_1_1_4"/>
<dbReference type="OrthoDB" id="9768187at2"/>
<dbReference type="UniPathway" id="UPA00219"/>
<dbReference type="Proteomes" id="UP000006552">
    <property type="component" value="Chromosome"/>
</dbReference>
<dbReference type="GO" id="GO:0032153">
    <property type="term" value="C:cell division site"/>
    <property type="evidence" value="ECO:0007669"/>
    <property type="project" value="UniProtKB-UniRule"/>
</dbReference>
<dbReference type="GO" id="GO:0005886">
    <property type="term" value="C:plasma membrane"/>
    <property type="evidence" value="ECO:0007669"/>
    <property type="project" value="UniProtKB-SubCell"/>
</dbReference>
<dbReference type="GO" id="GO:0015648">
    <property type="term" value="F:lipid-linked peptidoglycan transporter activity"/>
    <property type="evidence" value="ECO:0007669"/>
    <property type="project" value="TreeGrafter"/>
</dbReference>
<dbReference type="GO" id="GO:0008955">
    <property type="term" value="F:peptidoglycan glycosyltransferase activity"/>
    <property type="evidence" value="ECO:0007669"/>
    <property type="project" value="UniProtKB-UniRule"/>
</dbReference>
<dbReference type="GO" id="GO:0071555">
    <property type="term" value="P:cell wall organization"/>
    <property type="evidence" value="ECO:0007669"/>
    <property type="project" value="UniProtKB-KW"/>
</dbReference>
<dbReference type="GO" id="GO:0043093">
    <property type="term" value="P:FtsZ-dependent cytokinesis"/>
    <property type="evidence" value="ECO:0007669"/>
    <property type="project" value="UniProtKB-UniRule"/>
</dbReference>
<dbReference type="GO" id="GO:0009252">
    <property type="term" value="P:peptidoglycan biosynthetic process"/>
    <property type="evidence" value="ECO:0007669"/>
    <property type="project" value="UniProtKB-UniRule"/>
</dbReference>
<dbReference type="GO" id="GO:0008360">
    <property type="term" value="P:regulation of cell shape"/>
    <property type="evidence" value="ECO:0007669"/>
    <property type="project" value="UniProtKB-KW"/>
</dbReference>
<dbReference type="HAMAP" id="MF_00913">
    <property type="entry name" value="PGT_FtsW_proteobact"/>
    <property type="match status" value="1"/>
</dbReference>
<dbReference type="InterPro" id="IPR013437">
    <property type="entry name" value="FtsW"/>
</dbReference>
<dbReference type="InterPro" id="IPR001182">
    <property type="entry name" value="FtsW/RodA"/>
</dbReference>
<dbReference type="NCBIfam" id="TIGR02614">
    <property type="entry name" value="ftsW"/>
    <property type="match status" value="1"/>
</dbReference>
<dbReference type="PANTHER" id="PTHR30474">
    <property type="entry name" value="CELL CYCLE PROTEIN"/>
    <property type="match status" value="1"/>
</dbReference>
<dbReference type="PANTHER" id="PTHR30474:SF2">
    <property type="entry name" value="PEPTIDOGLYCAN GLYCOSYLTRANSFERASE FTSW-RELATED"/>
    <property type="match status" value="1"/>
</dbReference>
<dbReference type="Pfam" id="PF01098">
    <property type="entry name" value="FTSW_RODA_SPOVE"/>
    <property type="match status" value="1"/>
</dbReference>
<reference key="1">
    <citation type="journal article" date="2005" name="Arch. Microbiol.">
        <title>The genome sequence of an anaerobic aromatic-degrading denitrifying bacterium, strain EbN1.</title>
        <authorList>
            <person name="Rabus R."/>
            <person name="Kube M."/>
            <person name="Heider J."/>
            <person name="Beck A."/>
            <person name="Heitmann K."/>
            <person name="Widdel F."/>
            <person name="Reinhardt R."/>
        </authorList>
    </citation>
    <scope>NUCLEOTIDE SEQUENCE [LARGE SCALE GENOMIC DNA]</scope>
    <source>
        <strain>DSM 19018 / LMG 30748 / EbN1</strain>
    </source>
</reference>
<sequence>MKFASTFAGFFATRRENGGTQTSRAVDRLMRPADSLRELDPLLIWSATGLLLIGLVMVYSSSIATAEGSRFTGHQSHYFLLRHAMFLAVGIGAGLAAFQLSMRQWQRFAPWLFLIGVMLLVVVLIPGVGREVNGAQRWLPLGPLNLQPSELMKLFVALYAADYTVRKLPDMGSFRRGFLPMAAMILLVGFLLLGEPDFGAFVVITAIAFGVLFLGGINVRVFALLALVAVIGFMLLIWLSPYRRDRIFGFMDPWQDAFGKGYQLSHALIAFGRGEWFGVGLGASVEKLFYLPEAHTDFLLAVIAEELGFAGVLTVIALFAILIHRALVLGREAVKLERYFSGLVAMGIGLWLGVQSFINMGVNMGLLPTKGLTLPLMSFGGSGIVANCLALAILLRVDWEVRQLKRGCGA</sequence>
<protein>
    <recommendedName>
        <fullName evidence="1">Probable peptidoglycan glycosyltransferase FtsW</fullName>
        <shortName evidence="1">PGT</shortName>
        <ecNumber evidence="1">2.4.99.28</ecNumber>
    </recommendedName>
    <alternativeName>
        <fullName evidence="1">Cell division protein FtsW</fullName>
    </alternativeName>
    <alternativeName>
        <fullName evidence="1">Cell wall polymerase</fullName>
    </alternativeName>
    <alternativeName>
        <fullName evidence="1">Peptidoglycan polymerase</fullName>
        <shortName evidence="1">PG polymerase</shortName>
    </alternativeName>
</protein>
<accession>Q5P6Z5</accession>
<comment type="function">
    <text evidence="1">Peptidoglycan polymerase that is essential for cell division.</text>
</comment>
<comment type="catalytic activity">
    <reaction evidence="1">
        <text>[GlcNAc-(1-&gt;4)-Mur2Ac(oyl-L-Ala-gamma-D-Glu-L-Lys-D-Ala-D-Ala)](n)-di-trans,octa-cis-undecaprenyl diphosphate + beta-D-GlcNAc-(1-&gt;4)-Mur2Ac(oyl-L-Ala-gamma-D-Glu-L-Lys-D-Ala-D-Ala)-di-trans,octa-cis-undecaprenyl diphosphate = [GlcNAc-(1-&gt;4)-Mur2Ac(oyl-L-Ala-gamma-D-Glu-L-Lys-D-Ala-D-Ala)](n+1)-di-trans,octa-cis-undecaprenyl diphosphate + di-trans,octa-cis-undecaprenyl diphosphate + H(+)</text>
        <dbReference type="Rhea" id="RHEA:23708"/>
        <dbReference type="Rhea" id="RHEA-COMP:9602"/>
        <dbReference type="Rhea" id="RHEA-COMP:9603"/>
        <dbReference type="ChEBI" id="CHEBI:15378"/>
        <dbReference type="ChEBI" id="CHEBI:58405"/>
        <dbReference type="ChEBI" id="CHEBI:60033"/>
        <dbReference type="ChEBI" id="CHEBI:78435"/>
        <dbReference type="EC" id="2.4.99.28"/>
    </reaction>
</comment>
<comment type="pathway">
    <text evidence="1">Cell wall biogenesis; peptidoglycan biosynthesis.</text>
</comment>
<comment type="subcellular location">
    <subcellularLocation>
        <location evidence="1">Cell inner membrane</location>
        <topology evidence="1">Multi-pass membrane protein</topology>
    </subcellularLocation>
    <text evidence="1">Localizes to the division septum.</text>
</comment>
<comment type="similarity">
    <text evidence="1">Belongs to the SEDS family. FtsW subfamily.</text>
</comment>
<evidence type="ECO:0000255" key="1">
    <source>
        <dbReference type="HAMAP-Rule" id="MF_00913"/>
    </source>
</evidence>
<feature type="chain" id="PRO_0000415175" description="Probable peptidoglycan glycosyltransferase FtsW">
    <location>
        <begin position="1"/>
        <end position="410"/>
    </location>
</feature>
<feature type="transmembrane region" description="Helical" evidence="1">
    <location>
        <begin position="39"/>
        <end position="59"/>
    </location>
</feature>
<feature type="transmembrane region" description="Helical" evidence="1">
    <location>
        <begin position="78"/>
        <end position="98"/>
    </location>
</feature>
<feature type="transmembrane region" description="Helical" evidence="1">
    <location>
        <begin position="108"/>
        <end position="128"/>
    </location>
</feature>
<feature type="transmembrane region" description="Helical" evidence="1">
    <location>
        <begin position="177"/>
        <end position="197"/>
    </location>
</feature>
<feature type="transmembrane region" description="Helical" evidence="1">
    <location>
        <begin position="198"/>
        <end position="218"/>
    </location>
</feature>
<feature type="transmembrane region" description="Helical" evidence="1">
    <location>
        <begin position="221"/>
        <end position="241"/>
    </location>
</feature>
<feature type="transmembrane region" description="Helical" evidence="1">
    <location>
        <begin position="303"/>
        <end position="323"/>
    </location>
</feature>
<feature type="transmembrane region" description="Helical" evidence="1">
    <location>
        <begin position="342"/>
        <end position="362"/>
    </location>
</feature>
<feature type="transmembrane region" description="Helical" evidence="1">
    <location>
        <begin position="374"/>
        <end position="394"/>
    </location>
</feature>
<gene>
    <name evidence="1" type="primary">ftsW</name>
    <name type="ordered locus">AZOSEA07930</name>
    <name type="ORF">ebA1445</name>
</gene>
<keyword id="KW-0131">Cell cycle</keyword>
<keyword id="KW-0132">Cell division</keyword>
<keyword id="KW-0997">Cell inner membrane</keyword>
<keyword id="KW-1003">Cell membrane</keyword>
<keyword id="KW-0133">Cell shape</keyword>
<keyword id="KW-0961">Cell wall biogenesis/degradation</keyword>
<keyword id="KW-0328">Glycosyltransferase</keyword>
<keyword id="KW-0472">Membrane</keyword>
<keyword id="KW-0573">Peptidoglycan synthesis</keyword>
<keyword id="KW-1185">Reference proteome</keyword>
<keyword id="KW-0808">Transferase</keyword>
<keyword id="KW-0812">Transmembrane</keyword>
<keyword id="KW-1133">Transmembrane helix</keyword>
<name>FTSW_AROAE</name>
<proteinExistence type="inferred from homology"/>